<gene>
    <name evidence="1" type="primary">htpX</name>
    <name type="ordered locus">Achl_2779</name>
</gene>
<organism>
    <name type="scientific">Pseudarthrobacter chlorophenolicus (strain ATCC 700700 / DSM 12829 / CIP 107037 / JCM 12360 / KCTC 9906 / NCIMB 13794 / A6)</name>
    <name type="common">Arthrobacter chlorophenolicus</name>
    <dbReference type="NCBI Taxonomy" id="452863"/>
    <lineage>
        <taxon>Bacteria</taxon>
        <taxon>Bacillati</taxon>
        <taxon>Actinomycetota</taxon>
        <taxon>Actinomycetes</taxon>
        <taxon>Micrococcales</taxon>
        <taxon>Micrococcaceae</taxon>
        <taxon>Pseudarthrobacter</taxon>
    </lineage>
</organism>
<feature type="chain" id="PRO_1000124220" description="Protease HtpX homolog">
    <location>
        <begin position="1"/>
        <end position="289"/>
    </location>
</feature>
<feature type="transmembrane region" description="Helical" evidence="1">
    <location>
        <begin position="11"/>
        <end position="31"/>
    </location>
</feature>
<feature type="transmembrane region" description="Helical" evidence="1">
    <location>
        <begin position="36"/>
        <end position="54"/>
    </location>
</feature>
<feature type="transmembrane region" description="Helical" evidence="1">
    <location>
        <begin position="153"/>
        <end position="173"/>
    </location>
</feature>
<feature type="transmembrane region" description="Helical" evidence="1">
    <location>
        <begin position="182"/>
        <end position="202"/>
    </location>
</feature>
<feature type="active site" evidence="1">
    <location>
        <position position="139"/>
    </location>
</feature>
<feature type="binding site" evidence="1">
    <location>
        <position position="138"/>
    </location>
    <ligand>
        <name>Zn(2+)</name>
        <dbReference type="ChEBI" id="CHEBI:29105"/>
        <note>catalytic</note>
    </ligand>
</feature>
<feature type="binding site" evidence="1">
    <location>
        <position position="142"/>
    </location>
    <ligand>
        <name>Zn(2+)</name>
        <dbReference type="ChEBI" id="CHEBI:29105"/>
        <note>catalytic</note>
    </ligand>
</feature>
<feature type="binding site" evidence="1">
    <location>
        <position position="207"/>
    </location>
    <ligand>
        <name>Zn(2+)</name>
        <dbReference type="ChEBI" id="CHEBI:29105"/>
        <note>catalytic</note>
    </ligand>
</feature>
<name>HTPX_PSECP</name>
<comment type="cofactor">
    <cofactor evidence="1">
        <name>Zn(2+)</name>
        <dbReference type="ChEBI" id="CHEBI:29105"/>
    </cofactor>
    <text evidence="1">Binds 1 zinc ion per subunit.</text>
</comment>
<comment type="subcellular location">
    <subcellularLocation>
        <location evidence="1">Cell membrane</location>
        <topology evidence="1">Multi-pass membrane protein</topology>
    </subcellularLocation>
</comment>
<comment type="similarity">
    <text evidence="1">Belongs to the peptidase M48B family.</text>
</comment>
<evidence type="ECO:0000255" key="1">
    <source>
        <dbReference type="HAMAP-Rule" id="MF_00188"/>
    </source>
</evidence>
<dbReference type="EC" id="3.4.24.-" evidence="1"/>
<dbReference type="EMBL" id="CP001341">
    <property type="protein sequence ID" value="ACL40744.1"/>
    <property type="molecule type" value="Genomic_DNA"/>
</dbReference>
<dbReference type="RefSeq" id="WP_015937940.1">
    <property type="nucleotide sequence ID" value="NC_011886.1"/>
</dbReference>
<dbReference type="STRING" id="452863.Achl_2779"/>
<dbReference type="KEGG" id="ach:Achl_2779"/>
<dbReference type="eggNOG" id="COG0501">
    <property type="taxonomic scope" value="Bacteria"/>
</dbReference>
<dbReference type="HOGENOM" id="CLU_042266_3_1_11"/>
<dbReference type="OrthoDB" id="15218at2"/>
<dbReference type="Proteomes" id="UP000002505">
    <property type="component" value="Chromosome"/>
</dbReference>
<dbReference type="GO" id="GO:0005886">
    <property type="term" value="C:plasma membrane"/>
    <property type="evidence" value="ECO:0007669"/>
    <property type="project" value="UniProtKB-SubCell"/>
</dbReference>
<dbReference type="GO" id="GO:0004222">
    <property type="term" value="F:metalloendopeptidase activity"/>
    <property type="evidence" value="ECO:0007669"/>
    <property type="project" value="UniProtKB-UniRule"/>
</dbReference>
<dbReference type="GO" id="GO:0008270">
    <property type="term" value="F:zinc ion binding"/>
    <property type="evidence" value="ECO:0007669"/>
    <property type="project" value="UniProtKB-UniRule"/>
</dbReference>
<dbReference type="GO" id="GO:0006508">
    <property type="term" value="P:proteolysis"/>
    <property type="evidence" value="ECO:0007669"/>
    <property type="project" value="UniProtKB-KW"/>
</dbReference>
<dbReference type="CDD" id="cd07336">
    <property type="entry name" value="M48B_HtpX_like"/>
    <property type="match status" value="1"/>
</dbReference>
<dbReference type="Gene3D" id="3.30.2010.10">
    <property type="entry name" value="Metalloproteases ('zincins'), catalytic domain"/>
    <property type="match status" value="1"/>
</dbReference>
<dbReference type="HAMAP" id="MF_00188">
    <property type="entry name" value="Pept_M48_protease_HtpX"/>
    <property type="match status" value="1"/>
</dbReference>
<dbReference type="InterPro" id="IPR050083">
    <property type="entry name" value="HtpX_protease"/>
</dbReference>
<dbReference type="InterPro" id="IPR022919">
    <property type="entry name" value="Pept_M48_protease_HtpX"/>
</dbReference>
<dbReference type="InterPro" id="IPR001915">
    <property type="entry name" value="Peptidase_M48"/>
</dbReference>
<dbReference type="NCBIfam" id="NF002839">
    <property type="entry name" value="PRK03072.1"/>
    <property type="match status" value="1"/>
</dbReference>
<dbReference type="PANTHER" id="PTHR43221">
    <property type="entry name" value="PROTEASE HTPX"/>
    <property type="match status" value="1"/>
</dbReference>
<dbReference type="PANTHER" id="PTHR43221:SF1">
    <property type="entry name" value="PROTEASE HTPX"/>
    <property type="match status" value="1"/>
</dbReference>
<dbReference type="Pfam" id="PF01435">
    <property type="entry name" value="Peptidase_M48"/>
    <property type="match status" value="1"/>
</dbReference>
<dbReference type="PROSITE" id="PS00142">
    <property type="entry name" value="ZINC_PROTEASE"/>
    <property type="match status" value="1"/>
</dbReference>
<proteinExistence type="inferred from homology"/>
<protein>
    <recommendedName>
        <fullName evidence="1">Protease HtpX homolog</fullName>
        <ecNumber evidence="1">3.4.24.-</ecNumber>
    </recommendedName>
</protein>
<accession>B8HDM6</accession>
<reference key="1">
    <citation type="submission" date="2009-01" db="EMBL/GenBank/DDBJ databases">
        <title>Complete sequence of chromosome of Arthrobacter chlorophenolicus A6.</title>
        <authorList>
            <consortium name="US DOE Joint Genome Institute"/>
            <person name="Lucas S."/>
            <person name="Copeland A."/>
            <person name="Lapidus A."/>
            <person name="Glavina del Rio T."/>
            <person name="Tice H."/>
            <person name="Bruce D."/>
            <person name="Goodwin L."/>
            <person name="Pitluck S."/>
            <person name="Goltsman E."/>
            <person name="Clum A."/>
            <person name="Larimer F."/>
            <person name="Land M."/>
            <person name="Hauser L."/>
            <person name="Kyrpides N."/>
            <person name="Mikhailova N."/>
            <person name="Jansson J."/>
            <person name="Richardson P."/>
        </authorList>
    </citation>
    <scope>NUCLEOTIDE SEQUENCE [LARGE SCALE GENOMIC DNA]</scope>
    <source>
        <strain>ATCC 700700 / DSM 12829 / CIP 107037 / JCM 12360 / KCTC 9906 / NCIMB 13794 / A6</strain>
    </source>
</reference>
<keyword id="KW-1003">Cell membrane</keyword>
<keyword id="KW-0378">Hydrolase</keyword>
<keyword id="KW-0472">Membrane</keyword>
<keyword id="KW-0479">Metal-binding</keyword>
<keyword id="KW-0482">Metalloprotease</keyword>
<keyword id="KW-0645">Protease</keyword>
<keyword id="KW-0812">Transmembrane</keyword>
<keyword id="KW-1133">Transmembrane helix</keyword>
<keyword id="KW-0862">Zinc</keyword>
<sequence length="289" mass="31197">MHKHHNGLKTAALFGVLWAVLLALGALIGAGTRSSAPIWIMALVGVGTTFYGYWNSDKIAIRSMQAFEVSEAQAPQLYQIVRELSARANQPMPRIYVSPTMNPNAFATGRNPQNAAVCCTEGILQLLDARELRGVLGHELMHVYNRDILTSSVAAAVAGVITSVGQMLLFFGGGDRRNANPLAMIAMALLAPFAASLIQMAISRTREYDADEDGSQLTGDPLALASALAKIERGVTMVPLPPDQRLVNASHLMIANPFRGGAMNKLFATHPPMRDRIARLERMAGRPLQ</sequence>